<proteinExistence type="inferred from homology"/>
<comment type="function">
    <text evidence="1">Responsible for synthesis of pseudouridine from uracil-55 in the psi GC loop of transfer RNAs.</text>
</comment>
<comment type="catalytic activity">
    <reaction evidence="1">
        <text>uridine(55) in tRNA = pseudouridine(55) in tRNA</text>
        <dbReference type="Rhea" id="RHEA:42532"/>
        <dbReference type="Rhea" id="RHEA-COMP:10101"/>
        <dbReference type="Rhea" id="RHEA-COMP:10102"/>
        <dbReference type="ChEBI" id="CHEBI:65314"/>
        <dbReference type="ChEBI" id="CHEBI:65315"/>
        <dbReference type="EC" id="5.4.99.25"/>
    </reaction>
</comment>
<comment type="similarity">
    <text evidence="1">Belongs to the pseudouridine synthase TruB family. Type 1 subfamily.</text>
</comment>
<comment type="sequence caution" evidence="2">
    <conflict type="erroneous initiation">
        <sequence resource="EMBL-CDS" id="AAS71261"/>
    </conflict>
    <text>Truncated N-terminus.</text>
</comment>
<protein>
    <recommendedName>
        <fullName evidence="1">tRNA pseudouridine synthase B</fullName>
        <ecNumber evidence="1">5.4.99.25</ecNumber>
    </recommendedName>
    <alternativeName>
        <fullName evidence="1">tRNA pseudouridine(55) synthase</fullName>
        <shortName evidence="1">Psi55 synthase</shortName>
    </alternativeName>
    <alternativeName>
        <fullName evidence="1">tRNA pseudouridylate synthase</fullName>
    </alternativeName>
    <alternativeName>
        <fullName evidence="1">tRNA-uridine isomerase</fullName>
    </alternativeName>
</protein>
<reference key="1">
    <citation type="journal article" date="2004" name="J. Bacteriol.">
        <title>Comparative genomics of two Leptospira interrogans serovars reveals novel insights into physiology and pathogenesis.</title>
        <authorList>
            <person name="Nascimento A.L.T.O."/>
            <person name="Ko A.I."/>
            <person name="Martins E.A.L."/>
            <person name="Monteiro-Vitorello C.B."/>
            <person name="Ho P.L."/>
            <person name="Haake D.A."/>
            <person name="Verjovski-Almeida S."/>
            <person name="Hartskeerl R.A."/>
            <person name="Marques M.V."/>
            <person name="Oliveira M.C."/>
            <person name="Menck C.F.M."/>
            <person name="Leite L.C.C."/>
            <person name="Carrer H."/>
            <person name="Coutinho L.L."/>
            <person name="Degrave W.M."/>
            <person name="Dellagostin O.A."/>
            <person name="El-Dorry H."/>
            <person name="Ferro E.S."/>
            <person name="Ferro M.I.T."/>
            <person name="Furlan L.R."/>
            <person name="Gamberini M."/>
            <person name="Giglioti E.A."/>
            <person name="Goes-Neto A."/>
            <person name="Goldman G.H."/>
            <person name="Goldman M.H.S."/>
            <person name="Harakava R."/>
            <person name="Jeronimo S.M.B."/>
            <person name="Junqueira-de-Azevedo I.L.M."/>
            <person name="Kimura E.T."/>
            <person name="Kuramae E.E."/>
            <person name="Lemos E.G.M."/>
            <person name="Lemos M.V.F."/>
            <person name="Marino C.L."/>
            <person name="Nunes L.R."/>
            <person name="de Oliveira R.C."/>
            <person name="Pereira G.G."/>
            <person name="Reis M.S."/>
            <person name="Schriefer A."/>
            <person name="Siqueira W.J."/>
            <person name="Sommer P."/>
            <person name="Tsai S.M."/>
            <person name="Simpson A.J.G."/>
            <person name="Ferro J.A."/>
            <person name="Camargo L.E.A."/>
            <person name="Kitajima J.P."/>
            <person name="Setubal J.C."/>
            <person name="Van Sluys M.A."/>
        </authorList>
    </citation>
    <scope>NUCLEOTIDE SEQUENCE [LARGE SCALE GENOMIC DNA]</scope>
    <source>
        <strain>Fiocruz L1-130</strain>
    </source>
</reference>
<gene>
    <name evidence="1" type="primary">truB</name>
    <name type="ordered locus">LIC_12703</name>
</gene>
<accession>Q72NX5</accession>
<dbReference type="EC" id="5.4.99.25" evidence="1"/>
<dbReference type="EMBL" id="AE016823">
    <property type="protein sequence ID" value="AAS71261.1"/>
    <property type="status" value="ALT_INIT"/>
    <property type="molecule type" value="Genomic_DNA"/>
</dbReference>
<dbReference type="RefSeq" id="WP_001082027.1">
    <property type="nucleotide sequence ID" value="NC_005823.1"/>
</dbReference>
<dbReference type="SMR" id="Q72NX5"/>
<dbReference type="KEGG" id="lic:LIC_12703"/>
<dbReference type="HOGENOM" id="CLU_032087_0_1_12"/>
<dbReference type="Proteomes" id="UP000007037">
    <property type="component" value="Chromosome I"/>
</dbReference>
<dbReference type="GO" id="GO:0003723">
    <property type="term" value="F:RNA binding"/>
    <property type="evidence" value="ECO:0007669"/>
    <property type="project" value="InterPro"/>
</dbReference>
<dbReference type="GO" id="GO:0160148">
    <property type="term" value="F:tRNA pseudouridine(55) synthase activity"/>
    <property type="evidence" value="ECO:0007669"/>
    <property type="project" value="UniProtKB-EC"/>
</dbReference>
<dbReference type="GO" id="GO:1990481">
    <property type="term" value="P:mRNA pseudouridine synthesis"/>
    <property type="evidence" value="ECO:0007669"/>
    <property type="project" value="TreeGrafter"/>
</dbReference>
<dbReference type="GO" id="GO:0031119">
    <property type="term" value="P:tRNA pseudouridine synthesis"/>
    <property type="evidence" value="ECO:0007669"/>
    <property type="project" value="UniProtKB-UniRule"/>
</dbReference>
<dbReference type="Gene3D" id="3.30.2350.10">
    <property type="entry name" value="Pseudouridine synthase"/>
    <property type="match status" value="1"/>
</dbReference>
<dbReference type="HAMAP" id="MF_01080">
    <property type="entry name" value="TruB_bact"/>
    <property type="match status" value="1"/>
</dbReference>
<dbReference type="InterPro" id="IPR020103">
    <property type="entry name" value="PsdUridine_synth_cat_dom_sf"/>
</dbReference>
<dbReference type="InterPro" id="IPR002501">
    <property type="entry name" value="PsdUridine_synth_N"/>
</dbReference>
<dbReference type="InterPro" id="IPR014780">
    <property type="entry name" value="tRNA_psdUridine_synth_TruB"/>
</dbReference>
<dbReference type="NCBIfam" id="TIGR00431">
    <property type="entry name" value="TruB"/>
    <property type="match status" value="1"/>
</dbReference>
<dbReference type="PANTHER" id="PTHR13767:SF2">
    <property type="entry name" value="PSEUDOURIDYLATE SYNTHASE TRUB1"/>
    <property type="match status" value="1"/>
</dbReference>
<dbReference type="PANTHER" id="PTHR13767">
    <property type="entry name" value="TRNA-PSEUDOURIDINE SYNTHASE"/>
    <property type="match status" value="1"/>
</dbReference>
<dbReference type="Pfam" id="PF01509">
    <property type="entry name" value="TruB_N"/>
    <property type="match status" value="1"/>
</dbReference>
<dbReference type="SUPFAM" id="SSF55120">
    <property type="entry name" value="Pseudouridine synthase"/>
    <property type="match status" value="1"/>
</dbReference>
<evidence type="ECO:0000255" key="1">
    <source>
        <dbReference type="HAMAP-Rule" id="MF_01080"/>
    </source>
</evidence>
<evidence type="ECO:0000305" key="2"/>
<name>TRUB_LEPIC</name>
<sequence>MNRSDLLENPRTQTESGFLLIHKPVGMTSSDLVVTVRKKLGFKKVGHTGTLDRAASGLMILPIGSCTSFSSVFLEKEKSYEAWVRPGESTDSGDKEGEILESLSKEQTETWFQEHQEKLRDLFEQVPTWETQEAPEVSALKVNGRRRSDLFREGVALVPAVRKIKIYRYELGEFSPESISFQIRVSAGTYIRKIVMDISDRIGFPLRLEKLVRTSIGKLNLNQADSYESLLDGKIKIHPPETILDFPTVEVPDTEVRNVLNGRKIKLEWIPVNEFLLVSPEEEILAWCKKEEHGIHELDYKYLRVFPKN</sequence>
<organism>
    <name type="scientific">Leptospira interrogans serogroup Icterohaemorrhagiae serovar copenhageni (strain Fiocruz L1-130)</name>
    <dbReference type="NCBI Taxonomy" id="267671"/>
    <lineage>
        <taxon>Bacteria</taxon>
        <taxon>Pseudomonadati</taxon>
        <taxon>Spirochaetota</taxon>
        <taxon>Spirochaetia</taxon>
        <taxon>Leptospirales</taxon>
        <taxon>Leptospiraceae</taxon>
        <taxon>Leptospira</taxon>
    </lineage>
</organism>
<feature type="chain" id="PRO_0000121855" description="tRNA pseudouridine synthase B">
    <location>
        <begin position="1"/>
        <end position="309"/>
    </location>
</feature>
<feature type="active site" description="Nucleophile" evidence="1">
    <location>
        <position position="52"/>
    </location>
</feature>
<keyword id="KW-0413">Isomerase</keyword>
<keyword id="KW-0819">tRNA processing</keyword>